<feature type="chain" id="PRO_1000046379" description="Urease subunit gamma">
    <location>
        <begin position="1"/>
        <end position="100"/>
    </location>
</feature>
<dbReference type="EC" id="3.5.1.5" evidence="1"/>
<dbReference type="EMBL" id="CP000305">
    <property type="protein sequence ID" value="ABG17479.1"/>
    <property type="molecule type" value="Genomic_DNA"/>
</dbReference>
<dbReference type="EMBL" id="ACNQ01000008">
    <property type="protein sequence ID" value="EEO77582.1"/>
    <property type="molecule type" value="Genomic_DNA"/>
</dbReference>
<dbReference type="RefSeq" id="WP_002215288.1">
    <property type="nucleotide sequence ID" value="NZ_ACNQ01000008.1"/>
</dbReference>
<dbReference type="SMR" id="Q1CKK1"/>
<dbReference type="KEGG" id="ypn:YPN_1149"/>
<dbReference type="HOGENOM" id="CLU_145825_1_0_6"/>
<dbReference type="UniPathway" id="UPA00258">
    <property type="reaction ID" value="UER00370"/>
</dbReference>
<dbReference type="Proteomes" id="UP000008936">
    <property type="component" value="Chromosome"/>
</dbReference>
<dbReference type="GO" id="GO:0005737">
    <property type="term" value="C:cytoplasm"/>
    <property type="evidence" value="ECO:0007669"/>
    <property type="project" value="UniProtKB-SubCell"/>
</dbReference>
<dbReference type="GO" id="GO:0016151">
    <property type="term" value="F:nickel cation binding"/>
    <property type="evidence" value="ECO:0007669"/>
    <property type="project" value="InterPro"/>
</dbReference>
<dbReference type="GO" id="GO:0009039">
    <property type="term" value="F:urease activity"/>
    <property type="evidence" value="ECO:0007669"/>
    <property type="project" value="UniProtKB-UniRule"/>
</dbReference>
<dbReference type="GO" id="GO:0043419">
    <property type="term" value="P:urea catabolic process"/>
    <property type="evidence" value="ECO:0007669"/>
    <property type="project" value="UniProtKB-UniRule"/>
</dbReference>
<dbReference type="CDD" id="cd00390">
    <property type="entry name" value="Urease_gamma"/>
    <property type="match status" value="1"/>
</dbReference>
<dbReference type="Gene3D" id="3.30.280.10">
    <property type="entry name" value="Urease, gamma-like subunit"/>
    <property type="match status" value="1"/>
</dbReference>
<dbReference type="HAMAP" id="MF_00739">
    <property type="entry name" value="Urease_gamma"/>
    <property type="match status" value="1"/>
</dbReference>
<dbReference type="InterPro" id="IPR012010">
    <property type="entry name" value="Urease_gamma"/>
</dbReference>
<dbReference type="InterPro" id="IPR002026">
    <property type="entry name" value="Urease_gamma/gamma-beta_su"/>
</dbReference>
<dbReference type="InterPro" id="IPR036463">
    <property type="entry name" value="Urease_gamma_sf"/>
</dbReference>
<dbReference type="InterPro" id="IPR050069">
    <property type="entry name" value="Urease_subunit"/>
</dbReference>
<dbReference type="NCBIfam" id="NF009712">
    <property type="entry name" value="PRK13241.1"/>
    <property type="match status" value="1"/>
</dbReference>
<dbReference type="NCBIfam" id="TIGR00193">
    <property type="entry name" value="urease_gam"/>
    <property type="match status" value="1"/>
</dbReference>
<dbReference type="PANTHER" id="PTHR33569">
    <property type="entry name" value="UREASE"/>
    <property type="match status" value="1"/>
</dbReference>
<dbReference type="PANTHER" id="PTHR33569:SF1">
    <property type="entry name" value="UREASE"/>
    <property type="match status" value="1"/>
</dbReference>
<dbReference type="Pfam" id="PF00547">
    <property type="entry name" value="Urease_gamma"/>
    <property type="match status" value="1"/>
</dbReference>
<dbReference type="PIRSF" id="PIRSF001223">
    <property type="entry name" value="Urease_gamma"/>
    <property type="match status" value="1"/>
</dbReference>
<dbReference type="SUPFAM" id="SSF54111">
    <property type="entry name" value="Urease, gamma-subunit"/>
    <property type="match status" value="1"/>
</dbReference>
<sequence length="100" mass="11049">MQLTPREVEKLMIYTLSDVAFKRKARGLKLNYPEAVSIITVTAMEGARDGKSVEDVMKEASKVLTKDDVMDGVADLIPNVQVEAIFTDGSRLVTVHDPIK</sequence>
<accession>Q1CKK1</accession>
<accession>C4GR91</accession>
<organism>
    <name type="scientific">Yersinia pestis bv. Antiqua (strain Nepal516)</name>
    <dbReference type="NCBI Taxonomy" id="377628"/>
    <lineage>
        <taxon>Bacteria</taxon>
        <taxon>Pseudomonadati</taxon>
        <taxon>Pseudomonadota</taxon>
        <taxon>Gammaproteobacteria</taxon>
        <taxon>Enterobacterales</taxon>
        <taxon>Yersiniaceae</taxon>
        <taxon>Yersinia</taxon>
    </lineage>
</organism>
<comment type="catalytic activity">
    <reaction evidence="1">
        <text>urea + 2 H2O + H(+) = hydrogencarbonate + 2 NH4(+)</text>
        <dbReference type="Rhea" id="RHEA:20557"/>
        <dbReference type="ChEBI" id="CHEBI:15377"/>
        <dbReference type="ChEBI" id="CHEBI:15378"/>
        <dbReference type="ChEBI" id="CHEBI:16199"/>
        <dbReference type="ChEBI" id="CHEBI:17544"/>
        <dbReference type="ChEBI" id="CHEBI:28938"/>
        <dbReference type="EC" id="3.5.1.5"/>
    </reaction>
</comment>
<comment type="pathway">
    <text evidence="1">Nitrogen metabolism; urea degradation; CO(2) and NH(3) from urea (urease route): step 1/1.</text>
</comment>
<comment type="subunit">
    <text evidence="1">Heterotrimer of UreA (gamma), UreB (beta) and UreC (alpha) subunits. Three heterotrimers associate to form the active enzyme.</text>
</comment>
<comment type="subcellular location">
    <subcellularLocation>
        <location evidence="1">Cytoplasm</location>
    </subcellularLocation>
</comment>
<comment type="similarity">
    <text evidence="1">Belongs to the urease gamma subunit family.</text>
</comment>
<evidence type="ECO:0000255" key="1">
    <source>
        <dbReference type="HAMAP-Rule" id="MF_00739"/>
    </source>
</evidence>
<name>URE3_YERPN</name>
<proteinExistence type="inferred from homology"/>
<protein>
    <recommendedName>
        <fullName evidence="1">Urease subunit gamma</fullName>
        <ecNumber evidence="1">3.5.1.5</ecNumber>
    </recommendedName>
    <alternativeName>
        <fullName evidence="1">Urea amidohydrolase subunit gamma</fullName>
    </alternativeName>
</protein>
<gene>
    <name evidence="1" type="primary">ureA</name>
    <name type="ordered locus">YPN_1149</name>
    <name type="ORF">YP516_1259</name>
</gene>
<reference key="1">
    <citation type="journal article" date="2006" name="J. Bacteriol.">
        <title>Complete genome sequence of Yersinia pestis strains Antiqua and Nepal516: evidence of gene reduction in an emerging pathogen.</title>
        <authorList>
            <person name="Chain P.S.G."/>
            <person name="Hu P."/>
            <person name="Malfatti S.A."/>
            <person name="Radnedge L."/>
            <person name="Larimer F."/>
            <person name="Vergez L.M."/>
            <person name="Worsham P."/>
            <person name="Chu M.C."/>
            <person name="Andersen G.L."/>
        </authorList>
    </citation>
    <scope>NUCLEOTIDE SEQUENCE [LARGE SCALE GENOMIC DNA]</scope>
    <source>
        <strain>Nepal516</strain>
    </source>
</reference>
<reference key="2">
    <citation type="submission" date="2009-04" db="EMBL/GenBank/DDBJ databases">
        <title>Yersinia pestis Nepal516A whole genome shotgun sequencing project.</title>
        <authorList>
            <person name="Plunkett G. III"/>
            <person name="Anderson B.D."/>
            <person name="Baumler D.J."/>
            <person name="Burland V."/>
            <person name="Cabot E.L."/>
            <person name="Glasner J.D."/>
            <person name="Mau B."/>
            <person name="Neeno-Eckwall E."/>
            <person name="Perna N.T."/>
            <person name="Munk A.C."/>
            <person name="Tapia R."/>
            <person name="Green L.D."/>
            <person name="Rogers Y.C."/>
            <person name="Detter J.C."/>
            <person name="Bruce D.C."/>
            <person name="Brettin T.S."/>
        </authorList>
    </citation>
    <scope>NUCLEOTIDE SEQUENCE [LARGE SCALE GENOMIC DNA]</scope>
    <source>
        <strain>Nepal516</strain>
    </source>
</reference>
<keyword id="KW-0963">Cytoplasm</keyword>
<keyword id="KW-0378">Hydrolase</keyword>